<protein>
    <recommendedName>
        <fullName evidence="2">Peroxidase 2</fullName>
        <ecNumber>1.11.1.7</ecNumber>
    </recommendedName>
</protein>
<accession>P85994</accession>
<feature type="chain" id="PRO_0000363737" description="Peroxidase 2">
    <location>
        <begin position="1" status="less than"/>
        <end position="12" status="greater than"/>
    </location>
</feature>
<feature type="unsure residue" description="I or L">
    <location>
        <position position="1"/>
    </location>
</feature>
<feature type="unsure residue" description="L or I">
    <location>
        <position position="4"/>
    </location>
</feature>
<feature type="unsure residue" description="I or L">
    <location>
        <position position="11"/>
    </location>
</feature>
<feature type="non-terminal residue">
    <location>
        <position position="1"/>
    </location>
</feature>
<feature type="non-terminal residue">
    <location>
        <position position="12"/>
    </location>
</feature>
<organism>
    <name type="scientific">Vitis vinifera</name>
    <name type="common">Grape</name>
    <dbReference type="NCBI Taxonomy" id="29760"/>
    <lineage>
        <taxon>Eukaryota</taxon>
        <taxon>Viridiplantae</taxon>
        <taxon>Streptophyta</taxon>
        <taxon>Embryophyta</taxon>
        <taxon>Tracheophyta</taxon>
        <taxon>Spermatophyta</taxon>
        <taxon>Magnoliopsida</taxon>
        <taxon>eudicotyledons</taxon>
        <taxon>Gunneridae</taxon>
        <taxon>Pentapetalae</taxon>
        <taxon>rosids</taxon>
        <taxon>Vitales</taxon>
        <taxon>Vitaceae</taxon>
        <taxon>Viteae</taxon>
        <taxon>Vitis</taxon>
    </lineage>
</organism>
<proteinExistence type="evidence at protein level"/>
<sequence length="12" mass="1257">ISPLTGTNGEIR</sequence>
<keyword id="KW-0106">Calcium</keyword>
<keyword id="KW-0903">Direct protein sequencing</keyword>
<keyword id="KW-0349">Heme</keyword>
<keyword id="KW-0376">Hydrogen peroxide</keyword>
<keyword id="KW-0408">Iron</keyword>
<keyword id="KW-0479">Metal-binding</keyword>
<keyword id="KW-0560">Oxidoreductase</keyword>
<keyword id="KW-0575">Peroxidase</keyword>
<keyword id="KW-0964">Secreted</keyword>
<reference evidence="4" key="1">
    <citation type="submission" date="2008-07" db="UniProtKB">
        <authorList>
            <person name="Almagro L."/>
            <person name="Belchi-Navarro S."/>
            <person name="Pedreno M.A."/>
        </authorList>
    </citation>
    <scope>PROTEIN SEQUENCE</scope>
</reference>
<dbReference type="EC" id="1.11.1.7"/>
<dbReference type="GO" id="GO:0005576">
    <property type="term" value="C:extracellular region"/>
    <property type="evidence" value="ECO:0007669"/>
    <property type="project" value="UniProtKB-SubCell"/>
</dbReference>
<dbReference type="GO" id="GO:0140825">
    <property type="term" value="F:lactoperoxidase activity"/>
    <property type="evidence" value="ECO:0007669"/>
    <property type="project" value="UniProtKB-EC"/>
</dbReference>
<dbReference type="GO" id="GO:0046872">
    <property type="term" value="F:metal ion binding"/>
    <property type="evidence" value="ECO:0007669"/>
    <property type="project" value="UniProtKB-KW"/>
</dbReference>
<dbReference type="GO" id="GO:0042744">
    <property type="term" value="P:hydrogen peroxide catabolic process"/>
    <property type="evidence" value="ECO:0007669"/>
    <property type="project" value="UniProtKB-KW"/>
</dbReference>
<name>PER2_VITVI</name>
<evidence type="ECO:0000250" key="1">
    <source>
        <dbReference type="UniProtKB" id="P84516"/>
    </source>
</evidence>
<evidence type="ECO:0000250" key="2">
    <source>
        <dbReference type="UniProtKB" id="Q42578"/>
    </source>
</evidence>
<evidence type="ECO:0000255" key="3">
    <source>
        <dbReference type="PROSITE-ProRule" id="PRU00297"/>
    </source>
</evidence>
<evidence type="ECO:0000305" key="4"/>
<comment type="function">
    <text evidence="4">Removal of H(2)O(2), oxidation of toxic reductants, biosynthesis and degradation of lignin, suberization, auxin catabolism, response to environmental stresses such as wounding, pathogen attack and oxidative stress. These functions might be dependent on each isozyme/isoform in each plant tissue.</text>
</comment>
<comment type="catalytic activity">
    <reaction>
        <text>2 a phenolic donor + H2O2 = 2 a phenolic radical donor + 2 H2O</text>
        <dbReference type="Rhea" id="RHEA:56136"/>
        <dbReference type="ChEBI" id="CHEBI:15377"/>
        <dbReference type="ChEBI" id="CHEBI:16240"/>
        <dbReference type="ChEBI" id="CHEBI:139520"/>
        <dbReference type="ChEBI" id="CHEBI:139521"/>
        <dbReference type="EC" id="1.11.1.7"/>
    </reaction>
</comment>
<comment type="cofactor">
    <cofactor evidence="2 3">
        <name>heme b</name>
        <dbReference type="ChEBI" id="CHEBI:60344"/>
    </cofactor>
    <text evidence="2 3">Binds 1 heme b (iron(II)-protoporphyrin IX) group per subunit.</text>
</comment>
<comment type="cofactor">
    <cofactor evidence="2 3">
        <name>Ca(2+)</name>
        <dbReference type="ChEBI" id="CHEBI:29108"/>
    </cofactor>
    <text evidence="2 3">Binds 2 calcium ions per subunit.</text>
</comment>
<comment type="subcellular location">
    <subcellularLocation>
        <location evidence="1 3">Secreted</location>
    </subcellularLocation>
</comment>
<comment type="similarity">
    <text evidence="3">Belongs to the peroxidase family. Classical plant (class III) peroxidase subfamily.</text>
</comment>